<proteinExistence type="inferred from homology"/>
<feature type="chain" id="PRO_0000307495" description="Triosephosphate isomerase">
    <location>
        <begin position="1"/>
        <end position="250"/>
    </location>
</feature>
<feature type="active site" description="Electrophile" evidence="1">
    <location>
        <position position="96"/>
    </location>
</feature>
<feature type="active site" description="Proton acceptor" evidence="1">
    <location>
        <position position="168"/>
    </location>
</feature>
<feature type="binding site" evidence="1">
    <location>
        <begin position="9"/>
        <end position="11"/>
    </location>
    <ligand>
        <name>substrate</name>
    </ligand>
</feature>
<feature type="binding site" evidence="1">
    <location>
        <position position="174"/>
    </location>
    <ligand>
        <name>substrate</name>
    </ligand>
</feature>
<feature type="binding site" evidence="1">
    <location>
        <position position="216"/>
    </location>
    <ligand>
        <name>substrate</name>
    </ligand>
</feature>
<feature type="binding site" evidence="1">
    <location>
        <begin position="237"/>
        <end position="238"/>
    </location>
    <ligand>
        <name>substrate</name>
    </ligand>
</feature>
<name>TPIS_LEPBL</name>
<comment type="function">
    <text evidence="1">Involved in the gluconeogenesis. Catalyzes stereospecifically the conversion of dihydroxyacetone phosphate (DHAP) to D-glyceraldehyde-3-phosphate (G3P).</text>
</comment>
<comment type="catalytic activity">
    <reaction evidence="1">
        <text>D-glyceraldehyde 3-phosphate = dihydroxyacetone phosphate</text>
        <dbReference type="Rhea" id="RHEA:18585"/>
        <dbReference type="ChEBI" id="CHEBI:57642"/>
        <dbReference type="ChEBI" id="CHEBI:59776"/>
        <dbReference type="EC" id="5.3.1.1"/>
    </reaction>
</comment>
<comment type="pathway">
    <text evidence="1">Carbohydrate biosynthesis; gluconeogenesis.</text>
</comment>
<comment type="pathway">
    <text evidence="1">Carbohydrate degradation; glycolysis; D-glyceraldehyde 3-phosphate from glycerone phosphate: step 1/1.</text>
</comment>
<comment type="subunit">
    <text evidence="1">Homodimer.</text>
</comment>
<comment type="subcellular location">
    <subcellularLocation>
        <location evidence="1">Cytoplasm</location>
    </subcellularLocation>
</comment>
<comment type="similarity">
    <text evidence="1">Belongs to the triosephosphate isomerase family.</text>
</comment>
<organism>
    <name type="scientific">Leptospira borgpetersenii serovar Hardjo-bovis (strain L550)</name>
    <dbReference type="NCBI Taxonomy" id="355276"/>
    <lineage>
        <taxon>Bacteria</taxon>
        <taxon>Pseudomonadati</taxon>
        <taxon>Spirochaetota</taxon>
        <taxon>Spirochaetia</taxon>
        <taxon>Leptospirales</taxon>
        <taxon>Leptospiraceae</taxon>
        <taxon>Leptospira</taxon>
    </lineage>
</organism>
<reference key="1">
    <citation type="journal article" date="2006" name="Proc. Natl. Acad. Sci. U.S.A.">
        <title>Genome reduction in Leptospira borgpetersenii reflects limited transmission potential.</title>
        <authorList>
            <person name="Bulach D.M."/>
            <person name="Zuerner R.L."/>
            <person name="Wilson P."/>
            <person name="Seemann T."/>
            <person name="McGrath A."/>
            <person name="Cullen P.A."/>
            <person name="Davis J."/>
            <person name="Johnson M."/>
            <person name="Kuczek E."/>
            <person name="Alt D.P."/>
            <person name="Peterson-Burch B."/>
            <person name="Coppel R.L."/>
            <person name="Rood J.I."/>
            <person name="Davies J.K."/>
            <person name="Adler B."/>
        </authorList>
    </citation>
    <scope>NUCLEOTIDE SEQUENCE [LARGE SCALE GENOMIC DNA]</scope>
    <source>
        <strain>L550</strain>
    </source>
</reference>
<accession>Q052H8</accession>
<gene>
    <name evidence="1" type="primary">tpiA</name>
    <name type="ordered locus">LBL_1269</name>
</gene>
<keyword id="KW-0963">Cytoplasm</keyword>
<keyword id="KW-0312">Gluconeogenesis</keyword>
<keyword id="KW-0324">Glycolysis</keyword>
<keyword id="KW-0413">Isomerase</keyword>
<protein>
    <recommendedName>
        <fullName evidence="1">Triosephosphate isomerase</fullName>
        <shortName evidence="1">TIM</shortName>
        <shortName evidence="1">TPI</shortName>
        <ecNumber evidence="1">5.3.1.1</ecNumber>
    </recommendedName>
    <alternativeName>
        <fullName evidence="1">Triose-phosphate isomerase</fullName>
    </alternativeName>
</protein>
<sequence>MRKTVIAGNWKMNLSEKEALSLAHSIKEKIPAISKGRISMIFPSTLHLAGVAKILQGTEILVGAQNVYPSGLAAFTGETSPEQLKELGVKVVMIGHSERRQFLGETNSFCNEKIHFLLKNDFIVLYCVGETLMERESGKTFEVISSQIREGLKGIHSHSFSNLILAYEPVWAIGTGKVATPAQAQEVHFFIRKEIAGLFLGAKEIAESISILYGGSVKPDNIQTLLKEKDLDGGLVGGASQKIDTYAGLF</sequence>
<evidence type="ECO:0000255" key="1">
    <source>
        <dbReference type="HAMAP-Rule" id="MF_00147"/>
    </source>
</evidence>
<dbReference type="EC" id="5.3.1.1" evidence="1"/>
<dbReference type="EMBL" id="CP000348">
    <property type="protein sequence ID" value="ABJ78767.1"/>
    <property type="molecule type" value="Genomic_DNA"/>
</dbReference>
<dbReference type="RefSeq" id="WP_011669999.1">
    <property type="nucleotide sequence ID" value="NC_008508.1"/>
</dbReference>
<dbReference type="SMR" id="Q052H8"/>
<dbReference type="KEGG" id="lbl:LBL_1269"/>
<dbReference type="HOGENOM" id="CLU_024251_2_3_12"/>
<dbReference type="UniPathway" id="UPA00109">
    <property type="reaction ID" value="UER00189"/>
</dbReference>
<dbReference type="UniPathway" id="UPA00138"/>
<dbReference type="GO" id="GO:0005829">
    <property type="term" value="C:cytosol"/>
    <property type="evidence" value="ECO:0007669"/>
    <property type="project" value="TreeGrafter"/>
</dbReference>
<dbReference type="GO" id="GO:0004807">
    <property type="term" value="F:triose-phosphate isomerase activity"/>
    <property type="evidence" value="ECO:0007669"/>
    <property type="project" value="UniProtKB-UniRule"/>
</dbReference>
<dbReference type="GO" id="GO:0006094">
    <property type="term" value="P:gluconeogenesis"/>
    <property type="evidence" value="ECO:0007669"/>
    <property type="project" value="UniProtKB-UniRule"/>
</dbReference>
<dbReference type="GO" id="GO:0046166">
    <property type="term" value="P:glyceraldehyde-3-phosphate biosynthetic process"/>
    <property type="evidence" value="ECO:0007669"/>
    <property type="project" value="TreeGrafter"/>
</dbReference>
<dbReference type="GO" id="GO:0019563">
    <property type="term" value="P:glycerol catabolic process"/>
    <property type="evidence" value="ECO:0007669"/>
    <property type="project" value="TreeGrafter"/>
</dbReference>
<dbReference type="GO" id="GO:0006096">
    <property type="term" value="P:glycolytic process"/>
    <property type="evidence" value="ECO:0007669"/>
    <property type="project" value="UniProtKB-UniRule"/>
</dbReference>
<dbReference type="CDD" id="cd00311">
    <property type="entry name" value="TIM"/>
    <property type="match status" value="1"/>
</dbReference>
<dbReference type="FunFam" id="3.20.20.70:FF:000016">
    <property type="entry name" value="Triosephosphate isomerase"/>
    <property type="match status" value="1"/>
</dbReference>
<dbReference type="Gene3D" id="3.20.20.70">
    <property type="entry name" value="Aldolase class I"/>
    <property type="match status" value="1"/>
</dbReference>
<dbReference type="HAMAP" id="MF_00147_B">
    <property type="entry name" value="TIM_B"/>
    <property type="match status" value="1"/>
</dbReference>
<dbReference type="InterPro" id="IPR013785">
    <property type="entry name" value="Aldolase_TIM"/>
</dbReference>
<dbReference type="InterPro" id="IPR035990">
    <property type="entry name" value="TIM_sf"/>
</dbReference>
<dbReference type="InterPro" id="IPR022896">
    <property type="entry name" value="TrioseP_Isoase_bac/euk"/>
</dbReference>
<dbReference type="InterPro" id="IPR000652">
    <property type="entry name" value="Triosephosphate_isomerase"/>
</dbReference>
<dbReference type="InterPro" id="IPR020861">
    <property type="entry name" value="Triosephosphate_isomerase_AS"/>
</dbReference>
<dbReference type="NCBIfam" id="TIGR00419">
    <property type="entry name" value="tim"/>
    <property type="match status" value="1"/>
</dbReference>
<dbReference type="PANTHER" id="PTHR21139">
    <property type="entry name" value="TRIOSEPHOSPHATE ISOMERASE"/>
    <property type="match status" value="1"/>
</dbReference>
<dbReference type="PANTHER" id="PTHR21139:SF42">
    <property type="entry name" value="TRIOSEPHOSPHATE ISOMERASE"/>
    <property type="match status" value="1"/>
</dbReference>
<dbReference type="Pfam" id="PF00121">
    <property type="entry name" value="TIM"/>
    <property type="match status" value="1"/>
</dbReference>
<dbReference type="SUPFAM" id="SSF51351">
    <property type="entry name" value="Triosephosphate isomerase (TIM)"/>
    <property type="match status" value="1"/>
</dbReference>
<dbReference type="PROSITE" id="PS00171">
    <property type="entry name" value="TIM_1"/>
    <property type="match status" value="1"/>
</dbReference>
<dbReference type="PROSITE" id="PS51440">
    <property type="entry name" value="TIM_2"/>
    <property type="match status" value="1"/>
</dbReference>